<feature type="chain" id="PRO_0000266779" description="Small ribosomal subunit protein bS21">
    <location>
        <begin position="1"/>
        <end position="58"/>
    </location>
</feature>
<feature type="region of interest" description="Disordered" evidence="2">
    <location>
        <begin position="36"/>
        <end position="58"/>
    </location>
</feature>
<feature type="compositionally biased region" description="Basic residues" evidence="2">
    <location>
        <begin position="43"/>
        <end position="58"/>
    </location>
</feature>
<protein>
    <recommendedName>
        <fullName evidence="1">Small ribosomal subunit protein bS21</fullName>
    </recommendedName>
    <alternativeName>
        <fullName evidence="3">30S ribosomal protein S21</fullName>
    </alternativeName>
</protein>
<gene>
    <name evidence="1" type="primary">rpsU</name>
    <name type="ordered locus">MGAS10270_Spy0652</name>
</gene>
<dbReference type="EMBL" id="CP000260">
    <property type="protein sequence ID" value="ABF33717.1"/>
    <property type="status" value="ALT_INIT"/>
    <property type="molecule type" value="Genomic_DNA"/>
</dbReference>
<dbReference type="RefSeq" id="WP_000048058.1">
    <property type="nucleotide sequence ID" value="NZ_CVUH01000002.1"/>
</dbReference>
<dbReference type="SMR" id="Q1JHL9"/>
<dbReference type="GeneID" id="93936799"/>
<dbReference type="KEGG" id="sph:MGAS10270_Spy0652"/>
<dbReference type="HOGENOM" id="CLU_159258_3_2_9"/>
<dbReference type="Proteomes" id="UP000002436">
    <property type="component" value="Chromosome"/>
</dbReference>
<dbReference type="GO" id="GO:1990904">
    <property type="term" value="C:ribonucleoprotein complex"/>
    <property type="evidence" value="ECO:0007669"/>
    <property type="project" value="UniProtKB-KW"/>
</dbReference>
<dbReference type="GO" id="GO:0005840">
    <property type="term" value="C:ribosome"/>
    <property type="evidence" value="ECO:0007669"/>
    <property type="project" value="UniProtKB-KW"/>
</dbReference>
<dbReference type="GO" id="GO:0003735">
    <property type="term" value="F:structural constituent of ribosome"/>
    <property type="evidence" value="ECO:0007669"/>
    <property type="project" value="InterPro"/>
</dbReference>
<dbReference type="GO" id="GO:0006412">
    <property type="term" value="P:translation"/>
    <property type="evidence" value="ECO:0007669"/>
    <property type="project" value="UniProtKB-UniRule"/>
</dbReference>
<dbReference type="Gene3D" id="1.20.5.1150">
    <property type="entry name" value="Ribosomal protein S8"/>
    <property type="match status" value="1"/>
</dbReference>
<dbReference type="HAMAP" id="MF_00358">
    <property type="entry name" value="Ribosomal_bS21"/>
    <property type="match status" value="1"/>
</dbReference>
<dbReference type="InterPro" id="IPR001911">
    <property type="entry name" value="Ribosomal_bS21"/>
</dbReference>
<dbReference type="InterPro" id="IPR018278">
    <property type="entry name" value="Ribosomal_bS21_CS"/>
</dbReference>
<dbReference type="InterPro" id="IPR038380">
    <property type="entry name" value="Ribosomal_bS21_sf"/>
</dbReference>
<dbReference type="NCBIfam" id="TIGR00030">
    <property type="entry name" value="S21p"/>
    <property type="match status" value="1"/>
</dbReference>
<dbReference type="PANTHER" id="PTHR21109">
    <property type="entry name" value="MITOCHONDRIAL 28S RIBOSOMAL PROTEIN S21"/>
    <property type="match status" value="1"/>
</dbReference>
<dbReference type="PANTHER" id="PTHR21109:SF22">
    <property type="entry name" value="SMALL RIBOSOMAL SUBUNIT PROTEIN BS21"/>
    <property type="match status" value="1"/>
</dbReference>
<dbReference type="Pfam" id="PF01165">
    <property type="entry name" value="Ribosomal_S21"/>
    <property type="match status" value="1"/>
</dbReference>
<dbReference type="PRINTS" id="PR00976">
    <property type="entry name" value="RIBOSOMALS21"/>
</dbReference>
<dbReference type="PROSITE" id="PS01181">
    <property type="entry name" value="RIBOSOMAL_S21"/>
    <property type="match status" value="1"/>
</dbReference>
<evidence type="ECO:0000255" key="1">
    <source>
        <dbReference type="HAMAP-Rule" id="MF_00358"/>
    </source>
</evidence>
<evidence type="ECO:0000256" key="2">
    <source>
        <dbReference type="SAM" id="MobiDB-lite"/>
    </source>
</evidence>
<evidence type="ECO:0000305" key="3"/>
<organism>
    <name type="scientific">Streptococcus pyogenes serotype M2 (strain MGAS10270)</name>
    <dbReference type="NCBI Taxonomy" id="370552"/>
    <lineage>
        <taxon>Bacteria</taxon>
        <taxon>Bacillati</taxon>
        <taxon>Bacillota</taxon>
        <taxon>Bacilli</taxon>
        <taxon>Lactobacillales</taxon>
        <taxon>Streptococcaceae</taxon>
        <taxon>Streptococcus</taxon>
    </lineage>
</organism>
<comment type="similarity">
    <text evidence="1">Belongs to the bacterial ribosomal protein bS21 family.</text>
</comment>
<comment type="sequence caution" evidence="3">
    <conflict type="erroneous initiation">
        <sequence resource="EMBL-CDS" id="ABF33717"/>
    </conflict>
</comment>
<accession>Q1JHL9</accession>
<name>RS21_STRPD</name>
<proteinExistence type="inferred from homology"/>
<sequence>MSKTVVRKNESLDDALRRFKRSVTKAGTLQESRKREFYEKPSVKRKRKSEAARKRKKF</sequence>
<keyword id="KW-0687">Ribonucleoprotein</keyword>
<keyword id="KW-0689">Ribosomal protein</keyword>
<reference key="1">
    <citation type="journal article" date="2006" name="Proc. Natl. Acad. Sci. U.S.A.">
        <title>Molecular genetic anatomy of inter- and intraserotype variation in the human bacterial pathogen group A Streptococcus.</title>
        <authorList>
            <person name="Beres S.B."/>
            <person name="Richter E.W."/>
            <person name="Nagiec M.J."/>
            <person name="Sumby P."/>
            <person name="Porcella S.F."/>
            <person name="DeLeo F.R."/>
            <person name="Musser J.M."/>
        </authorList>
    </citation>
    <scope>NUCLEOTIDE SEQUENCE [LARGE SCALE GENOMIC DNA]</scope>
    <source>
        <strain>MGAS10270</strain>
    </source>
</reference>